<feature type="chain" id="PRO_1000018226" description="Tryptophan synthase alpha chain">
    <location>
        <begin position="1"/>
        <end position="270"/>
    </location>
</feature>
<feature type="active site" description="Proton acceptor" evidence="1">
    <location>
        <position position="49"/>
    </location>
</feature>
<feature type="active site" description="Proton acceptor" evidence="1">
    <location>
        <position position="60"/>
    </location>
</feature>
<protein>
    <recommendedName>
        <fullName evidence="1">Tryptophan synthase alpha chain</fullName>
        <ecNumber evidence="1">4.2.1.20</ecNumber>
    </recommendedName>
</protein>
<reference key="1">
    <citation type="journal article" date="2011" name="Appl. Environ. Microbiol.">
        <title>Genomic potential of Marinobacter aquaeolei, a biogeochemical 'opportunitroph'.</title>
        <authorList>
            <person name="Singer E."/>
            <person name="Webb E.A."/>
            <person name="Nelson W.C."/>
            <person name="Heidelberg J.F."/>
            <person name="Ivanova N."/>
            <person name="Pati A."/>
            <person name="Edwards K.J."/>
        </authorList>
    </citation>
    <scope>NUCLEOTIDE SEQUENCE [LARGE SCALE GENOMIC DNA]</scope>
    <source>
        <strain>ATCC 700491 / DSM 11845 / VT8</strain>
    </source>
</reference>
<keyword id="KW-0028">Amino-acid biosynthesis</keyword>
<keyword id="KW-0057">Aromatic amino acid biosynthesis</keyword>
<keyword id="KW-0456">Lyase</keyword>
<keyword id="KW-0822">Tryptophan biosynthesis</keyword>
<gene>
    <name evidence="1" type="primary">trpA</name>
    <name type="ordered locus">Maqu_1557</name>
</gene>
<comment type="function">
    <text evidence="1">The alpha subunit is responsible for the aldol cleavage of indoleglycerol phosphate to indole and glyceraldehyde 3-phosphate.</text>
</comment>
<comment type="catalytic activity">
    <reaction evidence="1">
        <text>(1S,2R)-1-C-(indol-3-yl)glycerol 3-phosphate + L-serine = D-glyceraldehyde 3-phosphate + L-tryptophan + H2O</text>
        <dbReference type="Rhea" id="RHEA:10532"/>
        <dbReference type="ChEBI" id="CHEBI:15377"/>
        <dbReference type="ChEBI" id="CHEBI:33384"/>
        <dbReference type="ChEBI" id="CHEBI:57912"/>
        <dbReference type="ChEBI" id="CHEBI:58866"/>
        <dbReference type="ChEBI" id="CHEBI:59776"/>
        <dbReference type="EC" id="4.2.1.20"/>
    </reaction>
</comment>
<comment type="pathway">
    <text evidence="1">Amino-acid biosynthesis; L-tryptophan biosynthesis; L-tryptophan from chorismate: step 5/5.</text>
</comment>
<comment type="subunit">
    <text evidence="1">Tetramer of two alpha and two beta chains.</text>
</comment>
<comment type="similarity">
    <text evidence="1">Belongs to the TrpA family.</text>
</comment>
<evidence type="ECO:0000255" key="1">
    <source>
        <dbReference type="HAMAP-Rule" id="MF_00131"/>
    </source>
</evidence>
<name>TRPA_MARN8</name>
<dbReference type="EC" id="4.2.1.20" evidence="1"/>
<dbReference type="EMBL" id="CP000514">
    <property type="protein sequence ID" value="ABM18641.1"/>
    <property type="molecule type" value="Genomic_DNA"/>
</dbReference>
<dbReference type="RefSeq" id="WP_011785043.1">
    <property type="nucleotide sequence ID" value="NC_008740.1"/>
</dbReference>
<dbReference type="SMR" id="A1U0X2"/>
<dbReference type="STRING" id="351348.Maqu_1557"/>
<dbReference type="KEGG" id="maq:Maqu_1557"/>
<dbReference type="eggNOG" id="COG0159">
    <property type="taxonomic scope" value="Bacteria"/>
</dbReference>
<dbReference type="HOGENOM" id="CLU_016734_0_0_6"/>
<dbReference type="OrthoDB" id="9804578at2"/>
<dbReference type="UniPathway" id="UPA00035">
    <property type="reaction ID" value="UER00044"/>
</dbReference>
<dbReference type="Proteomes" id="UP000000998">
    <property type="component" value="Chromosome"/>
</dbReference>
<dbReference type="GO" id="GO:0005829">
    <property type="term" value="C:cytosol"/>
    <property type="evidence" value="ECO:0007669"/>
    <property type="project" value="TreeGrafter"/>
</dbReference>
<dbReference type="GO" id="GO:0004834">
    <property type="term" value="F:tryptophan synthase activity"/>
    <property type="evidence" value="ECO:0007669"/>
    <property type="project" value="UniProtKB-UniRule"/>
</dbReference>
<dbReference type="CDD" id="cd04724">
    <property type="entry name" value="Tryptophan_synthase_alpha"/>
    <property type="match status" value="1"/>
</dbReference>
<dbReference type="FunFam" id="3.20.20.70:FF:000037">
    <property type="entry name" value="Tryptophan synthase alpha chain"/>
    <property type="match status" value="1"/>
</dbReference>
<dbReference type="Gene3D" id="3.20.20.70">
    <property type="entry name" value="Aldolase class I"/>
    <property type="match status" value="1"/>
</dbReference>
<dbReference type="HAMAP" id="MF_00131">
    <property type="entry name" value="Trp_synth_alpha"/>
    <property type="match status" value="1"/>
</dbReference>
<dbReference type="InterPro" id="IPR013785">
    <property type="entry name" value="Aldolase_TIM"/>
</dbReference>
<dbReference type="InterPro" id="IPR011060">
    <property type="entry name" value="RibuloseP-bd_barrel"/>
</dbReference>
<dbReference type="InterPro" id="IPR018204">
    <property type="entry name" value="Trp_synthase_alpha_AS"/>
</dbReference>
<dbReference type="InterPro" id="IPR002028">
    <property type="entry name" value="Trp_synthase_suA"/>
</dbReference>
<dbReference type="NCBIfam" id="TIGR00262">
    <property type="entry name" value="trpA"/>
    <property type="match status" value="1"/>
</dbReference>
<dbReference type="PANTHER" id="PTHR43406:SF1">
    <property type="entry name" value="TRYPTOPHAN SYNTHASE ALPHA CHAIN, CHLOROPLASTIC"/>
    <property type="match status" value="1"/>
</dbReference>
<dbReference type="PANTHER" id="PTHR43406">
    <property type="entry name" value="TRYPTOPHAN SYNTHASE, ALPHA CHAIN"/>
    <property type="match status" value="1"/>
</dbReference>
<dbReference type="Pfam" id="PF00290">
    <property type="entry name" value="Trp_syntA"/>
    <property type="match status" value="1"/>
</dbReference>
<dbReference type="SUPFAM" id="SSF51366">
    <property type="entry name" value="Ribulose-phoshate binding barrel"/>
    <property type="match status" value="1"/>
</dbReference>
<dbReference type="PROSITE" id="PS00167">
    <property type="entry name" value="TRP_SYNTHASE_ALPHA"/>
    <property type="match status" value="1"/>
</dbReference>
<sequence length="270" mass="28750">MSRIEGVLKALKEQGRKALIPYITAGDPHPEETVSLMHTLVSAGADIIELGVPFSDPMADGPVIQLACERALKHGTSLRQVMAMVKEFRKTDPDTPVVLMGYLNPMEAMGYEAFADAAADAGVDGVLTVDLPPEEADQVAPLFADRHLDPVFLLAPTTTDERIKAISEHSSGYVYYVSIKGVTGSATIDVDEVAKKVAHVHELTALPVGVGFGIRDAETAAAVGRVSDGVIVGSVLVDTIARHQTDPDALRNALTDLLHPMREALDSLAH</sequence>
<organism>
    <name type="scientific">Marinobacter nauticus (strain ATCC 700491 / DSM 11845 / VT8)</name>
    <name type="common">Marinobacter aquaeolei</name>
    <dbReference type="NCBI Taxonomy" id="351348"/>
    <lineage>
        <taxon>Bacteria</taxon>
        <taxon>Pseudomonadati</taxon>
        <taxon>Pseudomonadota</taxon>
        <taxon>Gammaproteobacteria</taxon>
        <taxon>Pseudomonadales</taxon>
        <taxon>Marinobacteraceae</taxon>
        <taxon>Marinobacter</taxon>
    </lineage>
</organism>
<accession>A1U0X2</accession>
<proteinExistence type="inferred from homology"/>